<feature type="chain" id="PRO_1000017744" description="Small ribosomal subunit protein eS24">
    <location>
        <begin position="1"/>
        <end position="102"/>
    </location>
</feature>
<sequence>MEIDIFEDKENKVFNRREIKFYVEYEGEATPKITDIKSKLVALLNSKKESTVVDNVQPHYGEPKALGYAKVYETVEDLEYIETKSVIAKNTEASEEAEEDEE</sequence>
<organism>
    <name type="scientific">Methanobrevibacter smithii (strain ATCC 35061 / DSM 861 / OCM 144 / PS)</name>
    <dbReference type="NCBI Taxonomy" id="420247"/>
    <lineage>
        <taxon>Archaea</taxon>
        <taxon>Methanobacteriati</taxon>
        <taxon>Methanobacteriota</taxon>
        <taxon>Methanomada group</taxon>
        <taxon>Methanobacteria</taxon>
        <taxon>Methanobacteriales</taxon>
        <taxon>Methanobacteriaceae</taxon>
        <taxon>Methanobrevibacter</taxon>
    </lineage>
</organism>
<reference key="1">
    <citation type="journal article" date="2007" name="Proc. Natl. Acad. Sci. U.S.A.">
        <title>Genomic and metabolic adaptations of Methanobrevibacter smithii to the human gut.</title>
        <authorList>
            <person name="Samuel B.S."/>
            <person name="Hansen E.E."/>
            <person name="Manchester J.K."/>
            <person name="Coutinho P.M."/>
            <person name="Henrissat B."/>
            <person name="Fulton R."/>
            <person name="Latreille P."/>
            <person name="Kim K."/>
            <person name="Wilson R.K."/>
            <person name="Gordon J.I."/>
        </authorList>
    </citation>
    <scope>NUCLEOTIDE SEQUENCE [LARGE SCALE GENOMIC DNA]</scope>
    <source>
        <strain>ATCC 35061 / DSM 861 / OCM 144 / PS</strain>
    </source>
</reference>
<gene>
    <name evidence="1" type="primary">rps24e</name>
    <name type="ordered locus">Msm_0194</name>
</gene>
<protein>
    <recommendedName>
        <fullName evidence="1">Small ribosomal subunit protein eS24</fullName>
    </recommendedName>
    <alternativeName>
        <fullName evidence="2">30S ribosomal protein S24e</fullName>
    </alternativeName>
</protein>
<comment type="similarity">
    <text evidence="1">Belongs to the eukaryotic ribosomal protein eS24 family.</text>
</comment>
<keyword id="KW-0687">Ribonucleoprotein</keyword>
<keyword id="KW-0689">Ribosomal protein</keyword>
<dbReference type="EMBL" id="CP000678">
    <property type="protein sequence ID" value="ABQ86399.1"/>
    <property type="molecule type" value="Genomic_DNA"/>
</dbReference>
<dbReference type="RefSeq" id="WP_011953748.1">
    <property type="nucleotide sequence ID" value="NZ_CP117965.1"/>
</dbReference>
<dbReference type="SMR" id="A5UJM1"/>
<dbReference type="STRING" id="420247.Msm_0194"/>
<dbReference type="EnsemblBacteria" id="ABQ86399">
    <property type="protein sequence ID" value="ABQ86399"/>
    <property type="gene ID" value="Msm_0194"/>
</dbReference>
<dbReference type="KEGG" id="msi:Msm_0194"/>
<dbReference type="PATRIC" id="fig|420247.28.peg.198"/>
<dbReference type="eggNOG" id="arCOG04182">
    <property type="taxonomic scope" value="Archaea"/>
</dbReference>
<dbReference type="HOGENOM" id="CLU_107248_3_1_2"/>
<dbReference type="Proteomes" id="UP000001992">
    <property type="component" value="Chromosome"/>
</dbReference>
<dbReference type="GO" id="GO:1990904">
    <property type="term" value="C:ribonucleoprotein complex"/>
    <property type="evidence" value="ECO:0007669"/>
    <property type="project" value="UniProtKB-KW"/>
</dbReference>
<dbReference type="GO" id="GO:0005840">
    <property type="term" value="C:ribosome"/>
    <property type="evidence" value="ECO:0007669"/>
    <property type="project" value="UniProtKB-KW"/>
</dbReference>
<dbReference type="GO" id="GO:0003735">
    <property type="term" value="F:structural constituent of ribosome"/>
    <property type="evidence" value="ECO:0007669"/>
    <property type="project" value="InterPro"/>
</dbReference>
<dbReference type="GO" id="GO:0006412">
    <property type="term" value="P:translation"/>
    <property type="evidence" value="ECO:0007669"/>
    <property type="project" value="UniProtKB-UniRule"/>
</dbReference>
<dbReference type="Gene3D" id="3.30.70.330">
    <property type="match status" value="1"/>
</dbReference>
<dbReference type="HAMAP" id="MF_00545">
    <property type="entry name" value="Ribosomal_eS24"/>
    <property type="match status" value="1"/>
</dbReference>
<dbReference type="InterPro" id="IPR012677">
    <property type="entry name" value="Nucleotide-bd_a/b_plait_sf"/>
</dbReference>
<dbReference type="InterPro" id="IPR001976">
    <property type="entry name" value="Ribosomal_eS24"/>
</dbReference>
<dbReference type="InterPro" id="IPR018098">
    <property type="entry name" value="Ribosomal_eS24_CS"/>
</dbReference>
<dbReference type="InterPro" id="IPR012678">
    <property type="entry name" value="Ribosomal_uL23/eL15/eS24_sf"/>
</dbReference>
<dbReference type="Pfam" id="PF01282">
    <property type="entry name" value="Ribosomal_S24e"/>
    <property type="match status" value="1"/>
</dbReference>
<dbReference type="SUPFAM" id="SSF54189">
    <property type="entry name" value="Ribosomal proteins S24e, L23 and L15e"/>
    <property type="match status" value="1"/>
</dbReference>
<dbReference type="PROSITE" id="PS00529">
    <property type="entry name" value="RIBOSOMAL_S24E"/>
    <property type="match status" value="1"/>
</dbReference>
<proteinExistence type="inferred from homology"/>
<name>RS24_METS3</name>
<evidence type="ECO:0000255" key="1">
    <source>
        <dbReference type="HAMAP-Rule" id="MF_00545"/>
    </source>
</evidence>
<evidence type="ECO:0000305" key="2"/>
<accession>A5UJM1</accession>